<evidence type="ECO:0000255" key="1">
    <source>
        <dbReference type="HAMAP-Rule" id="MF_00235"/>
    </source>
</evidence>
<sequence>MRVILLGAPGAGKGTQAQLIMEHFGIPQISTGDMLRAAVKAGTPLGLQAKDIMASGGLVSDDLIIALVKERISSSDCSNGFLFDGFPRTIPQAEALLEADVHIDHVIEIHVPDEEIVARLSGRRVHEASGRVYHIIHNAPRVEGHDDVTGEPLVQRPDDHEATVRKRLAVYHEQTEPLVGFYQKLVAEGKVKAPKYTRINGIGSVDSIRQQLLDVLR</sequence>
<feature type="chain" id="PRO_1000100541" description="Adenylate kinase">
    <location>
        <begin position="1"/>
        <end position="217"/>
    </location>
</feature>
<feature type="region of interest" description="NMP" evidence="1">
    <location>
        <begin position="30"/>
        <end position="59"/>
    </location>
</feature>
<feature type="region of interest" description="LID" evidence="1">
    <location>
        <begin position="122"/>
        <end position="159"/>
    </location>
</feature>
<feature type="binding site" evidence="1">
    <location>
        <begin position="10"/>
        <end position="15"/>
    </location>
    <ligand>
        <name>ATP</name>
        <dbReference type="ChEBI" id="CHEBI:30616"/>
    </ligand>
</feature>
<feature type="binding site" evidence="1">
    <location>
        <position position="31"/>
    </location>
    <ligand>
        <name>AMP</name>
        <dbReference type="ChEBI" id="CHEBI:456215"/>
    </ligand>
</feature>
<feature type="binding site" evidence="1">
    <location>
        <position position="36"/>
    </location>
    <ligand>
        <name>AMP</name>
        <dbReference type="ChEBI" id="CHEBI:456215"/>
    </ligand>
</feature>
<feature type="binding site" evidence="1">
    <location>
        <begin position="57"/>
        <end position="59"/>
    </location>
    <ligand>
        <name>AMP</name>
        <dbReference type="ChEBI" id="CHEBI:456215"/>
    </ligand>
</feature>
<feature type="binding site" evidence="1">
    <location>
        <begin position="85"/>
        <end position="88"/>
    </location>
    <ligand>
        <name>AMP</name>
        <dbReference type="ChEBI" id="CHEBI:456215"/>
    </ligand>
</feature>
<feature type="binding site" evidence="1">
    <location>
        <position position="92"/>
    </location>
    <ligand>
        <name>AMP</name>
        <dbReference type="ChEBI" id="CHEBI:456215"/>
    </ligand>
</feature>
<feature type="binding site" evidence="1">
    <location>
        <position position="123"/>
    </location>
    <ligand>
        <name>ATP</name>
        <dbReference type="ChEBI" id="CHEBI:30616"/>
    </ligand>
</feature>
<feature type="binding site" evidence="1">
    <location>
        <begin position="132"/>
        <end position="133"/>
    </location>
    <ligand>
        <name>ATP</name>
        <dbReference type="ChEBI" id="CHEBI:30616"/>
    </ligand>
</feature>
<feature type="binding site" evidence="1">
    <location>
        <position position="156"/>
    </location>
    <ligand>
        <name>AMP</name>
        <dbReference type="ChEBI" id="CHEBI:456215"/>
    </ligand>
</feature>
<feature type="binding site" evidence="1">
    <location>
        <position position="167"/>
    </location>
    <ligand>
        <name>AMP</name>
        <dbReference type="ChEBI" id="CHEBI:456215"/>
    </ligand>
</feature>
<feature type="binding site" evidence="1">
    <location>
        <position position="203"/>
    </location>
    <ligand>
        <name>ATP</name>
        <dbReference type="ChEBI" id="CHEBI:30616"/>
    </ligand>
</feature>
<name>KAD_CELJU</name>
<protein>
    <recommendedName>
        <fullName evidence="1">Adenylate kinase</fullName>
        <shortName evidence="1">AK</shortName>
        <ecNumber evidence="1">2.7.4.3</ecNumber>
    </recommendedName>
    <alternativeName>
        <fullName evidence="1">ATP-AMP transphosphorylase</fullName>
    </alternativeName>
    <alternativeName>
        <fullName evidence="1">ATP:AMP phosphotransferase</fullName>
    </alternativeName>
    <alternativeName>
        <fullName evidence="1">Adenylate monophosphate kinase</fullName>
    </alternativeName>
</protein>
<dbReference type="EC" id="2.7.4.3" evidence="1"/>
<dbReference type="EMBL" id="CP000934">
    <property type="protein sequence ID" value="ACE82914.1"/>
    <property type="molecule type" value="Genomic_DNA"/>
</dbReference>
<dbReference type="RefSeq" id="WP_012487691.1">
    <property type="nucleotide sequence ID" value="NC_010995.1"/>
</dbReference>
<dbReference type="SMR" id="B3PIE4"/>
<dbReference type="STRING" id="498211.CJA_2084"/>
<dbReference type="KEGG" id="cja:CJA_2084"/>
<dbReference type="eggNOG" id="COG0563">
    <property type="taxonomic scope" value="Bacteria"/>
</dbReference>
<dbReference type="HOGENOM" id="CLU_032354_1_2_6"/>
<dbReference type="OrthoDB" id="9805030at2"/>
<dbReference type="UniPathway" id="UPA00588">
    <property type="reaction ID" value="UER00649"/>
</dbReference>
<dbReference type="Proteomes" id="UP000001036">
    <property type="component" value="Chromosome"/>
</dbReference>
<dbReference type="GO" id="GO:0005737">
    <property type="term" value="C:cytoplasm"/>
    <property type="evidence" value="ECO:0007669"/>
    <property type="project" value="UniProtKB-SubCell"/>
</dbReference>
<dbReference type="GO" id="GO:0004017">
    <property type="term" value="F:adenylate kinase activity"/>
    <property type="evidence" value="ECO:0007669"/>
    <property type="project" value="UniProtKB-UniRule"/>
</dbReference>
<dbReference type="GO" id="GO:0005524">
    <property type="term" value="F:ATP binding"/>
    <property type="evidence" value="ECO:0007669"/>
    <property type="project" value="UniProtKB-UniRule"/>
</dbReference>
<dbReference type="GO" id="GO:0044209">
    <property type="term" value="P:AMP salvage"/>
    <property type="evidence" value="ECO:0007669"/>
    <property type="project" value="UniProtKB-UniRule"/>
</dbReference>
<dbReference type="CDD" id="cd01428">
    <property type="entry name" value="ADK"/>
    <property type="match status" value="1"/>
</dbReference>
<dbReference type="FunFam" id="3.40.50.300:FF:000106">
    <property type="entry name" value="Adenylate kinase mitochondrial"/>
    <property type="match status" value="1"/>
</dbReference>
<dbReference type="Gene3D" id="3.40.50.300">
    <property type="entry name" value="P-loop containing nucleotide triphosphate hydrolases"/>
    <property type="match status" value="1"/>
</dbReference>
<dbReference type="HAMAP" id="MF_00235">
    <property type="entry name" value="Adenylate_kinase_Adk"/>
    <property type="match status" value="1"/>
</dbReference>
<dbReference type="InterPro" id="IPR006259">
    <property type="entry name" value="Adenyl_kin_sub"/>
</dbReference>
<dbReference type="InterPro" id="IPR000850">
    <property type="entry name" value="Adenylat/UMP-CMP_kin"/>
</dbReference>
<dbReference type="InterPro" id="IPR033690">
    <property type="entry name" value="Adenylat_kinase_CS"/>
</dbReference>
<dbReference type="InterPro" id="IPR007862">
    <property type="entry name" value="Adenylate_kinase_lid-dom"/>
</dbReference>
<dbReference type="InterPro" id="IPR027417">
    <property type="entry name" value="P-loop_NTPase"/>
</dbReference>
<dbReference type="NCBIfam" id="TIGR01351">
    <property type="entry name" value="adk"/>
    <property type="match status" value="1"/>
</dbReference>
<dbReference type="NCBIfam" id="NF001379">
    <property type="entry name" value="PRK00279.1-1"/>
    <property type="match status" value="1"/>
</dbReference>
<dbReference type="NCBIfam" id="NF001380">
    <property type="entry name" value="PRK00279.1-2"/>
    <property type="match status" value="1"/>
</dbReference>
<dbReference type="NCBIfam" id="NF001381">
    <property type="entry name" value="PRK00279.1-3"/>
    <property type="match status" value="1"/>
</dbReference>
<dbReference type="NCBIfam" id="NF011100">
    <property type="entry name" value="PRK14527.1"/>
    <property type="match status" value="1"/>
</dbReference>
<dbReference type="PANTHER" id="PTHR23359">
    <property type="entry name" value="NUCLEOTIDE KINASE"/>
    <property type="match status" value="1"/>
</dbReference>
<dbReference type="Pfam" id="PF00406">
    <property type="entry name" value="ADK"/>
    <property type="match status" value="1"/>
</dbReference>
<dbReference type="Pfam" id="PF05191">
    <property type="entry name" value="ADK_lid"/>
    <property type="match status" value="1"/>
</dbReference>
<dbReference type="PRINTS" id="PR00094">
    <property type="entry name" value="ADENYLTKNASE"/>
</dbReference>
<dbReference type="SUPFAM" id="SSF52540">
    <property type="entry name" value="P-loop containing nucleoside triphosphate hydrolases"/>
    <property type="match status" value="1"/>
</dbReference>
<dbReference type="PROSITE" id="PS00113">
    <property type="entry name" value="ADENYLATE_KINASE"/>
    <property type="match status" value="1"/>
</dbReference>
<comment type="function">
    <text evidence="1">Catalyzes the reversible transfer of the terminal phosphate group between ATP and AMP. Plays an important role in cellular energy homeostasis and in adenine nucleotide metabolism.</text>
</comment>
<comment type="catalytic activity">
    <reaction evidence="1">
        <text>AMP + ATP = 2 ADP</text>
        <dbReference type="Rhea" id="RHEA:12973"/>
        <dbReference type="ChEBI" id="CHEBI:30616"/>
        <dbReference type="ChEBI" id="CHEBI:456215"/>
        <dbReference type="ChEBI" id="CHEBI:456216"/>
        <dbReference type="EC" id="2.7.4.3"/>
    </reaction>
</comment>
<comment type="pathway">
    <text evidence="1">Purine metabolism; AMP biosynthesis via salvage pathway; AMP from ADP: step 1/1.</text>
</comment>
<comment type="subunit">
    <text evidence="1">Monomer.</text>
</comment>
<comment type="subcellular location">
    <subcellularLocation>
        <location evidence="1">Cytoplasm</location>
    </subcellularLocation>
</comment>
<comment type="domain">
    <text evidence="1">Consists of three domains, a large central CORE domain and two small peripheral domains, NMPbind and LID, which undergo movements during catalysis. The LID domain closes over the site of phosphoryl transfer upon ATP binding. Assembling and dissambling the active center during each catalytic cycle provides an effective means to prevent ATP hydrolysis.</text>
</comment>
<comment type="similarity">
    <text evidence="1">Belongs to the adenylate kinase family.</text>
</comment>
<proteinExistence type="inferred from homology"/>
<reference key="1">
    <citation type="journal article" date="2008" name="J. Bacteriol.">
        <title>Insights into plant cell wall degradation from the genome sequence of the soil bacterium Cellvibrio japonicus.</title>
        <authorList>
            <person name="DeBoy R.T."/>
            <person name="Mongodin E.F."/>
            <person name="Fouts D.E."/>
            <person name="Tailford L.E."/>
            <person name="Khouri H."/>
            <person name="Emerson J.B."/>
            <person name="Mohamoud Y."/>
            <person name="Watkins K."/>
            <person name="Henrissat B."/>
            <person name="Gilbert H.J."/>
            <person name="Nelson K.E."/>
        </authorList>
    </citation>
    <scope>NUCLEOTIDE SEQUENCE [LARGE SCALE GENOMIC DNA]</scope>
    <source>
        <strain>Ueda107</strain>
    </source>
</reference>
<organism>
    <name type="scientific">Cellvibrio japonicus (strain Ueda107)</name>
    <name type="common">Pseudomonas fluorescens subsp. cellulosa</name>
    <dbReference type="NCBI Taxonomy" id="498211"/>
    <lineage>
        <taxon>Bacteria</taxon>
        <taxon>Pseudomonadati</taxon>
        <taxon>Pseudomonadota</taxon>
        <taxon>Gammaproteobacteria</taxon>
        <taxon>Cellvibrionales</taxon>
        <taxon>Cellvibrionaceae</taxon>
        <taxon>Cellvibrio</taxon>
    </lineage>
</organism>
<keyword id="KW-0067">ATP-binding</keyword>
<keyword id="KW-0963">Cytoplasm</keyword>
<keyword id="KW-0418">Kinase</keyword>
<keyword id="KW-0545">Nucleotide biosynthesis</keyword>
<keyword id="KW-0547">Nucleotide-binding</keyword>
<keyword id="KW-1185">Reference proteome</keyword>
<keyword id="KW-0808">Transferase</keyword>
<accession>B3PIE4</accession>
<gene>
    <name evidence="1" type="primary">adk</name>
    <name type="ordered locus">CJA_2084</name>
</gene>